<gene>
    <name evidence="1" type="primary">surE</name>
    <name type="ordered locus">CLD_0542</name>
</gene>
<dbReference type="EC" id="3.1.3.5" evidence="1"/>
<dbReference type="EMBL" id="CP000939">
    <property type="protein sequence ID" value="ACA43298.1"/>
    <property type="molecule type" value="Genomic_DNA"/>
</dbReference>
<dbReference type="RefSeq" id="WP_003399041.1">
    <property type="nucleotide sequence ID" value="NC_010516.1"/>
</dbReference>
<dbReference type="SMR" id="B1IDC2"/>
<dbReference type="KEGG" id="cbb:CLD_0542"/>
<dbReference type="HOGENOM" id="CLU_045192_1_3_9"/>
<dbReference type="Proteomes" id="UP000008541">
    <property type="component" value="Chromosome"/>
</dbReference>
<dbReference type="GO" id="GO:0005737">
    <property type="term" value="C:cytoplasm"/>
    <property type="evidence" value="ECO:0007669"/>
    <property type="project" value="UniProtKB-SubCell"/>
</dbReference>
<dbReference type="GO" id="GO:0008254">
    <property type="term" value="F:3'-nucleotidase activity"/>
    <property type="evidence" value="ECO:0007669"/>
    <property type="project" value="TreeGrafter"/>
</dbReference>
<dbReference type="GO" id="GO:0008253">
    <property type="term" value="F:5'-nucleotidase activity"/>
    <property type="evidence" value="ECO:0007669"/>
    <property type="project" value="UniProtKB-UniRule"/>
</dbReference>
<dbReference type="GO" id="GO:0004309">
    <property type="term" value="F:exopolyphosphatase activity"/>
    <property type="evidence" value="ECO:0007669"/>
    <property type="project" value="TreeGrafter"/>
</dbReference>
<dbReference type="GO" id="GO:0046872">
    <property type="term" value="F:metal ion binding"/>
    <property type="evidence" value="ECO:0007669"/>
    <property type="project" value="UniProtKB-UniRule"/>
</dbReference>
<dbReference type="GO" id="GO:0000166">
    <property type="term" value="F:nucleotide binding"/>
    <property type="evidence" value="ECO:0007669"/>
    <property type="project" value="UniProtKB-KW"/>
</dbReference>
<dbReference type="FunFam" id="3.40.1210.10:FF:000001">
    <property type="entry name" value="5'/3'-nucleotidase SurE"/>
    <property type="match status" value="1"/>
</dbReference>
<dbReference type="Gene3D" id="3.40.1210.10">
    <property type="entry name" value="Survival protein SurE-like phosphatase/nucleotidase"/>
    <property type="match status" value="1"/>
</dbReference>
<dbReference type="HAMAP" id="MF_00060">
    <property type="entry name" value="SurE"/>
    <property type="match status" value="1"/>
</dbReference>
<dbReference type="InterPro" id="IPR030048">
    <property type="entry name" value="SurE"/>
</dbReference>
<dbReference type="InterPro" id="IPR002828">
    <property type="entry name" value="SurE-like_Pase/nucleotidase"/>
</dbReference>
<dbReference type="InterPro" id="IPR036523">
    <property type="entry name" value="SurE-like_sf"/>
</dbReference>
<dbReference type="NCBIfam" id="NF001490">
    <property type="entry name" value="PRK00346.1-4"/>
    <property type="match status" value="1"/>
</dbReference>
<dbReference type="NCBIfam" id="NF010543">
    <property type="entry name" value="PRK13933.1"/>
    <property type="match status" value="1"/>
</dbReference>
<dbReference type="NCBIfam" id="TIGR00087">
    <property type="entry name" value="surE"/>
    <property type="match status" value="1"/>
</dbReference>
<dbReference type="PANTHER" id="PTHR30457">
    <property type="entry name" value="5'-NUCLEOTIDASE SURE"/>
    <property type="match status" value="1"/>
</dbReference>
<dbReference type="PANTHER" id="PTHR30457:SF12">
    <property type="entry name" value="5'_3'-NUCLEOTIDASE SURE"/>
    <property type="match status" value="1"/>
</dbReference>
<dbReference type="Pfam" id="PF01975">
    <property type="entry name" value="SurE"/>
    <property type="match status" value="1"/>
</dbReference>
<dbReference type="SUPFAM" id="SSF64167">
    <property type="entry name" value="SurE-like"/>
    <property type="match status" value="1"/>
</dbReference>
<reference key="1">
    <citation type="journal article" date="2007" name="PLoS ONE">
        <title>Analysis of the neurotoxin complex genes in Clostridium botulinum A1-A4 and B1 strains: BoNT/A3, /Ba4 and /B1 clusters are located within plasmids.</title>
        <authorList>
            <person name="Smith T.J."/>
            <person name="Hill K.K."/>
            <person name="Foley B.T."/>
            <person name="Detter J.C."/>
            <person name="Munk A.C."/>
            <person name="Bruce D.C."/>
            <person name="Doggett N.A."/>
            <person name="Smith L.A."/>
            <person name="Marks J.D."/>
            <person name="Xie G."/>
            <person name="Brettin T.S."/>
        </authorList>
    </citation>
    <scope>NUCLEOTIDE SEQUENCE [LARGE SCALE GENOMIC DNA]</scope>
    <source>
        <strain>Okra / Type B1</strain>
    </source>
</reference>
<sequence length="252" mass="28209">MNILLTNDDGIEAEGINTLAELLSKYHNVTMVAPENQRSASSHSITIYEPIIVKQVKKPYNIEAYSISGTPADCVRVALDKLVPDNIDMVISGINKGLNIGNDILYSGTVSAAIEGAMYKVPSMAVSAQFIKNKKENYKIAAKYALGMLNRLKKEDLKNDVVLNLNIPFCSEEEIKGIKVCKVGNKIFNTRFSEEIDEEGNKVLKLEGDINKDIYEGTDVYYIRNKYVTLTPLHYDLTNFNILEETEQLFLS</sequence>
<proteinExistence type="inferred from homology"/>
<name>SURE_CLOBK</name>
<keyword id="KW-0963">Cytoplasm</keyword>
<keyword id="KW-0378">Hydrolase</keyword>
<keyword id="KW-0479">Metal-binding</keyword>
<keyword id="KW-0547">Nucleotide-binding</keyword>
<evidence type="ECO:0000255" key="1">
    <source>
        <dbReference type="HAMAP-Rule" id="MF_00060"/>
    </source>
</evidence>
<organism>
    <name type="scientific">Clostridium botulinum (strain Okra / Type B1)</name>
    <dbReference type="NCBI Taxonomy" id="498213"/>
    <lineage>
        <taxon>Bacteria</taxon>
        <taxon>Bacillati</taxon>
        <taxon>Bacillota</taxon>
        <taxon>Clostridia</taxon>
        <taxon>Eubacteriales</taxon>
        <taxon>Clostridiaceae</taxon>
        <taxon>Clostridium</taxon>
    </lineage>
</organism>
<feature type="chain" id="PRO_1000091993" description="5'-nucleotidase SurE">
    <location>
        <begin position="1"/>
        <end position="252"/>
    </location>
</feature>
<feature type="binding site" evidence="1">
    <location>
        <position position="8"/>
    </location>
    <ligand>
        <name>a divalent metal cation</name>
        <dbReference type="ChEBI" id="CHEBI:60240"/>
    </ligand>
</feature>
<feature type="binding site" evidence="1">
    <location>
        <position position="9"/>
    </location>
    <ligand>
        <name>a divalent metal cation</name>
        <dbReference type="ChEBI" id="CHEBI:60240"/>
    </ligand>
</feature>
<feature type="binding site" evidence="1">
    <location>
        <position position="39"/>
    </location>
    <ligand>
        <name>a divalent metal cation</name>
        <dbReference type="ChEBI" id="CHEBI:60240"/>
    </ligand>
</feature>
<feature type="binding site" evidence="1">
    <location>
        <position position="95"/>
    </location>
    <ligand>
        <name>a divalent metal cation</name>
        <dbReference type="ChEBI" id="CHEBI:60240"/>
    </ligand>
</feature>
<comment type="function">
    <text evidence="1">Nucleotidase that shows phosphatase activity on nucleoside 5'-monophosphates.</text>
</comment>
<comment type="catalytic activity">
    <reaction evidence="1">
        <text>a ribonucleoside 5'-phosphate + H2O = a ribonucleoside + phosphate</text>
        <dbReference type="Rhea" id="RHEA:12484"/>
        <dbReference type="ChEBI" id="CHEBI:15377"/>
        <dbReference type="ChEBI" id="CHEBI:18254"/>
        <dbReference type="ChEBI" id="CHEBI:43474"/>
        <dbReference type="ChEBI" id="CHEBI:58043"/>
        <dbReference type="EC" id="3.1.3.5"/>
    </reaction>
</comment>
<comment type="cofactor">
    <cofactor evidence="1">
        <name>a divalent metal cation</name>
        <dbReference type="ChEBI" id="CHEBI:60240"/>
    </cofactor>
    <text evidence="1">Binds 1 divalent metal cation per subunit.</text>
</comment>
<comment type="subcellular location">
    <subcellularLocation>
        <location evidence="1">Cytoplasm</location>
    </subcellularLocation>
</comment>
<comment type="similarity">
    <text evidence="1">Belongs to the SurE nucleotidase family.</text>
</comment>
<accession>B1IDC2</accession>
<protein>
    <recommendedName>
        <fullName evidence="1">5'-nucleotidase SurE</fullName>
        <ecNumber evidence="1">3.1.3.5</ecNumber>
    </recommendedName>
    <alternativeName>
        <fullName evidence="1">Nucleoside 5'-monophosphate phosphohydrolase</fullName>
    </alternativeName>
</protein>